<dbReference type="EMBL" id="CP000425">
    <property type="protein sequence ID" value="ABJ72563.1"/>
    <property type="molecule type" value="Genomic_DNA"/>
</dbReference>
<dbReference type="RefSeq" id="WP_011675904.1">
    <property type="nucleotide sequence ID" value="NC_008527.1"/>
</dbReference>
<dbReference type="SMR" id="Q02ZQ9"/>
<dbReference type="KEGG" id="llc:LACR_1025"/>
<dbReference type="HOGENOM" id="CLU_050019_1_0_9"/>
<dbReference type="Proteomes" id="UP000000240">
    <property type="component" value="Chromosome"/>
</dbReference>
<dbReference type="GO" id="GO:0003677">
    <property type="term" value="F:DNA binding"/>
    <property type="evidence" value="ECO:0007669"/>
    <property type="project" value="InterPro"/>
</dbReference>
<dbReference type="GO" id="GO:0045892">
    <property type="term" value="P:negative regulation of DNA-templated transcription"/>
    <property type="evidence" value="ECO:0007669"/>
    <property type="project" value="UniProtKB-UniRule"/>
</dbReference>
<dbReference type="Gene3D" id="3.30.450.40">
    <property type="match status" value="1"/>
</dbReference>
<dbReference type="Gene3D" id="3.30.390.60">
    <property type="entry name" value="Heat-inducible transcription repressor hrca homolog, domain 3"/>
    <property type="match status" value="1"/>
</dbReference>
<dbReference type="Gene3D" id="1.10.10.10">
    <property type="entry name" value="Winged helix-like DNA-binding domain superfamily/Winged helix DNA-binding domain"/>
    <property type="match status" value="1"/>
</dbReference>
<dbReference type="HAMAP" id="MF_00081">
    <property type="entry name" value="HrcA"/>
    <property type="match status" value="1"/>
</dbReference>
<dbReference type="InterPro" id="IPR029016">
    <property type="entry name" value="GAF-like_dom_sf"/>
</dbReference>
<dbReference type="InterPro" id="IPR002571">
    <property type="entry name" value="HrcA"/>
</dbReference>
<dbReference type="InterPro" id="IPR021153">
    <property type="entry name" value="HrcA_C"/>
</dbReference>
<dbReference type="InterPro" id="IPR036388">
    <property type="entry name" value="WH-like_DNA-bd_sf"/>
</dbReference>
<dbReference type="InterPro" id="IPR036390">
    <property type="entry name" value="WH_DNA-bd_sf"/>
</dbReference>
<dbReference type="InterPro" id="IPR005104">
    <property type="entry name" value="WHTH_HrcA_DNA-bd"/>
</dbReference>
<dbReference type="InterPro" id="IPR023120">
    <property type="entry name" value="WHTH_transcript_rep_HrcA_IDD"/>
</dbReference>
<dbReference type="NCBIfam" id="TIGR00331">
    <property type="entry name" value="hrcA"/>
    <property type="match status" value="1"/>
</dbReference>
<dbReference type="PANTHER" id="PTHR34824">
    <property type="entry name" value="HEAT-INDUCIBLE TRANSCRIPTION REPRESSOR HRCA"/>
    <property type="match status" value="1"/>
</dbReference>
<dbReference type="PANTHER" id="PTHR34824:SF1">
    <property type="entry name" value="HEAT-INDUCIBLE TRANSCRIPTION REPRESSOR HRCA"/>
    <property type="match status" value="1"/>
</dbReference>
<dbReference type="Pfam" id="PF01628">
    <property type="entry name" value="HrcA"/>
    <property type="match status" value="1"/>
</dbReference>
<dbReference type="Pfam" id="PF03444">
    <property type="entry name" value="HrcA_DNA-bdg"/>
    <property type="match status" value="1"/>
</dbReference>
<dbReference type="PIRSF" id="PIRSF005485">
    <property type="entry name" value="HrcA"/>
    <property type="match status" value="1"/>
</dbReference>
<dbReference type="SUPFAM" id="SSF55781">
    <property type="entry name" value="GAF domain-like"/>
    <property type="match status" value="1"/>
</dbReference>
<dbReference type="SUPFAM" id="SSF46785">
    <property type="entry name" value="Winged helix' DNA-binding domain"/>
    <property type="match status" value="1"/>
</dbReference>
<proteinExistence type="inferred from homology"/>
<gene>
    <name evidence="1" type="primary">hrcA</name>
    <name type="ordered locus">LACR_1025</name>
</gene>
<organism>
    <name type="scientific">Lactococcus lactis subsp. cremoris (strain SK11)</name>
    <dbReference type="NCBI Taxonomy" id="272622"/>
    <lineage>
        <taxon>Bacteria</taxon>
        <taxon>Bacillati</taxon>
        <taxon>Bacillota</taxon>
        <taxon>Bacilli</taxon>
        <taxon>Lactobacillales</taxon>
        <taxon>Streptococcaceae</taxon>
        <taxon>Lactococcus</taxon>
        <taxon>Lactococcus cremoris subsp. cremoris</taxon>
    </lineage>
</organism>
<feature type="chain" id="PRO_1000010414" description="Heat-inducible transcription repressor HrcA">
    <location>
        <begin position="1"/>
        <end position="347"/>
    </location>
</feature>
<reference key="1">
    <citation type="journal article" date="2006" name="Proc. Natl. Acad. Sci. U.S.A.">
        <title>Comparative genomics of the lactic acid bacteria.</title>
        <authorList>
            <person name="Makarova K.S."/>
            <person name="Slesarev A."/>
            <person name="Wolf Y.I."/>
            <person name="Sorokin A."/>
            <person name="Mirkin B."/>
            <person name="Koonin E.V."/>
            <person name="Pavlov A."/>
            <person name="Pavlova N."/>
            <person name="Karamychev V."/>
            <person name="Polouchine N."/>
            <person name="Shakhova V."/>
            <person name="Grigoriev I."/>
            <person name="Lou Y."/>
            <person name="Rohksar D."/>
            <person name="Lucas S."/>
            <person name="Huang K."/>
            <person name="Goodstein D.M."/>
            <person name="Hawkins T."/>
            <person name="Plengvidhya V."/>
            <person name="Welker D."/>
            <person name="Hughes J."/>
            <person name="Goh Y."/>
            <person name="Benson A."/>
            <person name="Baldwin K."/>
            <person name="Lee J.-H."/>
            <person name="Diaz-Muniz I."/>
            <person name="Dosti B."/>
            <person name="Smeianov V."/>
            <person name="Wechter W."/>
            <person name="Barabote R."/>
            <person name="Lorca G."/>
            <person name="Altermann E."/>
            <person name="Barrangou R."/>
            <person name="Ganesan B."/>
            <person name="Xie Y."/>
            <person name="Rawsthorne H."/>
            <person name="Tamir D."/>
            <person name="Parker C."/>
            <person name="Breidt F."/>
            <person name="Broadbent J.R."/>
            <person name="Hutkins R."/>
            <person name="O'Sullivan D."/>
            <person name="Steele J."/>
            <person name="Unlu G."/>
            <person name="Saier M.H. Jr."/>
            <person name="Klaenhammer T."/>
            <person name="Richardson P."/>
            <person name="Kozyavkin S."/>
            <person name="Weimer B.C."/>
            <person name="Mills D.A."/>
        </authorList>
    </citation>
    <scope>NUCLEOTIDE SEQUENCE [LARGE SCALE GENOMIC DNA]</scope>
    <source>
        <strain>SK11</strain>
    </source>
</reference>
<evidence type="ECO:0000255" key="1">
    <source>
        <dbReference type="HAMAP-Rule" id="MF_00081"/>
    </source>
</evidence>
<keyword id="KW-0678">Repressor</keyword>
<keyword id="KW-0346">Stress response</keyword>
<keyword id="KW-0804">Transcription</keyword>
<keyword id="KW-0805">Transcription regulation</keyword>
<sequence length="347" mass="39923">MITERQRQILNLIVSLYAKDHTPIGSKSLLDSIQASSATIRNDMKALERLGLIQKEHTSSGRIPSVSGYKYFVENVIQLEEFSQNDLFKVMKAFDGDFYRLSDLFKTAAKSLSELTGLTSFVLNAPQRDQQLVSFEMVILDNHSVLSVITLGTGEVRTNQFILPKSMTEADLAVFSNLVKERLVGKKVIDIHYTLRTEIPQIVQRYFKVTSEVLQLFESIFDDLFKEHLTVAGRKNIFDYATDNLAELYKLFSDDERMLHEIREITNNDEMRAVKFDNDEKFMKNLTIISQKFVIPYRGFGTLTVVGPVEMDYQRTLSVLDLVAKVLTMKLSDYYRYLDGNHYEISK</sequence>
<name>HRCA_LACLS</name>
<protein>
    <recommendedName>
        <fullName evidence="1">Heat-inducible transcription repressor HrcA</fullName>
    </recommendedName>
</protein>
<comment type="function">
    <text evidence="1">Negative regulator of class I heat shock genes (grpE-dnaK-dnaJ and groELS operons). Prevents heat-shock induction of these operons.</text>
</comment>
<comment type="similarity">
    <text evidence="1">Belongs to the HrcA family.</text>
</comment>
<accession>Q02ZQ9</accession>